<feature type="chain" id="PRO_0000123505" description="Pre-mRNA-splicing factor CWC21">
    <location>
        <begin position="1"/>
        <end position="135"/>
    </location>
</feature>
<feature type="domain" description="CWF21" evidence="1">
    <location>
        <begin position="65"/>
        <end position="109"/>
    </location>
</feature>
<feature type="region of interest" description="Disordered" evidence="2">
    <location>
        <begin position="1"/>
        <end position="67"/>
    </location>
</feature>
<feature type="region of interest" description="Interaction with PRP8" evidence="7">
    <location>
        <begin position="53"/>
        <end position="97"/>
    </location>
</feature>
<feature type="region of interest" description="Disordered" evidence="2">
    <location>
        <begin position="110"/>
        <end position="135"/>
    </location>
</feature>
<feature type="coiled-coil region" evidence="1">
    <location>
        <begin position="65"/>
        <end position="102"/>
    </location>
</feature>
<feature type="compositionally biased region" description="Polar residues" evidence="2">
    <location>
        <begin position="12"/>
        <end position="27"/>
    </location>
</feature>
<feature type="compositionally biased region" description="Low complexity" evidence="2">
    <location>
        <begin position="33"/>
        <end position="43"/>
    </location>
</feature>
<feature type="compositionally biased region" description="Polar residues" evidence="2">
    <location>
        <begin position="110"/>
        <end position="120"/>
    </location>
</feature>
<feature type="compositionally biased region" description="Basic and acidic residues" evidence="2">
    <location>
        <begin position="126"/>
        <end position="135"/>
    </location>
</feature>
<feature type="turn" evidence="10">
    <location>
        <begin position="12"/>
        <end position="15"/>
    </location>
</feature>
<feature type="strand" evidence="10">
    <location>
        <begin position="20"/>
        <end position="22"/>
    </location>
</feature>
<feature type="helix" evidence="9">
    <location>
        <begin position="24"/>
        <end position="26"/>
    </location>
</feature>
<feature type="helix" evidence="10">
    <location>
        <begin position="59"/>
        <end position="86"/>
    </location>
</feature>
<feature type="helix" evidence="10">
    <location>
        <begin position="92"/>
        <end position="118"/>
    </location>
</feature>
<protein>
    <recommendedName>
        <fullName>Pre-mRNA-splicing factor CWC21</fullName>
    </recommendedName>
    <alternativeName>
        <fullName>Complexed with CEF1 protein 21</fullName>
    </alternativeName>
</protein>
<sequence>MSYNGIGLKSAKGSSTSGHVQRSLASNNRRRPQGSQQQRQQRQNAIKKASHDKASRPLAVQKQIETHMEKREIEVQVSELRDRLEEEETLSEEQIDKKCEALRAKLTNEWQEQQRMSSLYTPRKARLTEEQHRHE</sequence>
<gene>
    <name type="primary">CWC21</name>
    <name type="ordered locus">YDR482C</name>
</gene>
<comment type="function">
    <text evidence="6 7">Involved in pre-mRNA splicing. May function at or prior to the first catalytic step of splicing at the catalytic center of the spliceosome, together with ISY1. May do so by stabilizing the catalytic center or the position of the RNA substrate.</text>
</comment>
<comment type="subunit">
    <text evidence="3 6 7">Associates with the NTC complex (or PRP19-associated complex), composed of at least CEF1, CLF1, ISY1, NTC20, SNT309, SYF1, SYF2, and PRP19. The NTC complex associates with the spliceosome after the release of the U1 and U4 snRNAs and forms the CWC spliceosome subcomplex (or CEF1-associated complex) reminiscent of a late-stage spliceosome composed also of the U2, U5 and U6 snRNAs and at least BUD13, BUD31, BRR2, CDC40, CUS1, CWC2, CWC15, CWC21, CWC22, CWC23, CWC24, CWC25, CWC27, ECM2, HSH155, IST3, LEA1, MSL1, PRP8, PRP9, PRP11, PRP21, PRP22, PRP45, PRP46, SLU7, SMB1, SMD1, SMD2, SMD3, SMX2, SMX3, SNU114, SPP2, RSE1 and YJU2. Interacts directly with PRP8 (via SCwid domain). Interacts directly with SNU114 (via C-terminus).</text>
</comment>
<comment type="subcellular location">
    <subcellularLocation>
        <location evidence="4">Cytoplasm</location>
    </subcellularLocation>
    <subcellularLocation>
        <location evidence="4">Nucleus</location>
    </subcellularLocation>
</comment>
<comment type="miscellaneous">
    <text evidence="5">Present with 556 molecules/cell in log phase SD medium.</text>
</comment>
<comment type="similarity">
    <text evidence="8">Belongs to the CWC21 family.</text>
</comment>
<evidence type="ECO:0000255" key="1"/>
<evidence type="ECO:0000256" key="2">
    <source>
        <dbReference type="SAM" id="MobiDB-lite"/>
    </source>
</evidence>
<evidence type="ECO:0000269" key="3">
    <source>
    </source>
</evidence>
<evidence type="ECO:0000269" key="4">
    <source>
    </source>
</evidence>
<evidence type="ECO:0000269" key="5">
    <source>
    </source>
</evidence>
<evidence type="ECO:0000269" key="6">
    <source>
    </source>
</evidence>
<evidence type="ECO:0000269" key="7">
    <source>
    </source>
</evidence>
<evidence type="ECO:0000305" key="8"/>
<evidence type="ECO:0007829" key="9">
    <source>
        <dbReference type="PDB" id="6BK8"/>
    </source>
</evidence>
<evidence type="ECO:0007829" key="10">
    <source>
        <dbReference type="PDB" id="9DTR"/>
    </source>
</evidence>
<dbReference type="EMBL" id="U33050">
    <property type="protein sequence ID" value="AAB64929.1"/>
    <property type="molecule type" value="Genomic_DNA"/>
</dbReference>
<dbReference type="EMBL" id="AY557800">
    <property type="protein sequence ID" value="AAS56126.1"/>
    <property type="molecule type" value="Genomic_DNA"/>
</dbReference>
<dbReference type="EMBL" id="BK006938">
    <property type="protein sequence ID" value="DAA12315.1"/>
    <property type="molecule type" value="Genomic_DNA"/>
</dbReference>
<dbReference type="PIR" id="S69649">
    <property type="entry name" value="S69649"/>
</dbReference>
<dbReference type="RefSeq" id="NP_010770.3">
    <property type="nucleotide sequence ID" value="NM_001180790.3"/>
</dbReference>
<dbReference type="PDB" id="5GM6">
    <property type="method" value="EM"/>
    <property type="resolution" value="3.50 A"/>
    <property type="chains" value="X=1-135"/>
</dbReference>
<dbReference type="PDB" id="5GMK">
    <property type="method" value="EM"/>
    <property type="resolution" value="3.40 A"/>
    <property type="chains" value="J=1-135"/>
</dbReference>
<dbReference type="PDB" id="5LJ3">
    <property type="method" value="EM"/>
    <property type="resolution" value="3.80 A"/>
    <property type="chains" value="R=1-135"/>
</dbReference>
<dbReference type="PDB" id="5LJ5">
    <property type="method" value="EM"/>
    <property type="resolution" value="3.80 A"/>
    <property type="chains" value="R=1-135"/>
</dbReference>
<dbReference type="PDB" id="5MPS">
    <property type="method" value="EM"/>
    <property type="resolution" value="3.85 A"/>
    <property type="chains" value="R=1-135"/>
</dbReference>
<dbReference type="PDB" id="5MQ0">
    <property type="method" value="EM"/>
    <property type="resolution" value="4.17 A"/>
    <property type="chains" value="R=1-135"/>
</dbReference>
<dbReference type="PDB" id="5WSG">
    <property type="method" value="EM"/>
    <property type="resolution" value="4.00 A"/>
    <property type="chains" value="J=1-135"/>
</dbReference>
<dbReference type="PDB" id="5YLZ">
    <property type="method" value="EM"/>
    <property type="resolution" value="3.60 A"/>
    <property type="chains" value="R=1-135"/>
</dbReference>
<dbReference type="PDB" id="6BK8">
    <property type="method" value="EM"/>
    <property type="resolution" value="3.30 A"/>
    <property type="chains" value="K=1-135"/>
</dbReference>
<dbReference type="PDB" id="6EXN">
    <property type="method" value="EM"/>
    <property type="resolution" value="3.70 A"/>
    <property type="chains" value="R=1-135"/>
</dbReference>
<dbReference type="PDB" id="6J6G">
    <property type="method" value="EM"/>
    <property type="resolution" value="3.20 A"/>
    <property type="chains" value="J=1-135"/>
</dbReference>
<dbReference type="PDB" id="6J6H">
    <property type="method" value="EM"/>
    <property type="resolution" value="3.60 A"/>
    <property type="chains" value="J=1-135"/>
</dbReference>
<dbReference type="PDB" id="6J6N">
    <property type="method" value="EM"/>
    <property type="resolution" value="3.86 A"/>
    <property type="chains" value="J=1-135"/>
</dbReference>
<dbReference type="PDB" id="6J6Q">
    <property type="method" value="EM"/>
    <property type="resolution" value="3.70 A"/>
    <property type="chains" value="J=1-135"/>
</dbReference>
<dbReference type="PDB" id="9DTR">
    <property type="method" value="EM"/>
    <property type="resolution" value="2.31 A"/>
    <property type="chains" value="R=1-135"/>
</dbReference>
<dbReference type="PDBsum" id="5GM6"/>
<dbReference type="PDBsum" id="5GMK"/>
<dbReference type="PDBsum" id="5LJ3"/>
<dbReference type="PDBsum" id="5LJ5"/>
<dbReference type="PDBsum" id="5MPS"/>
<dbReference type="PDBsum" id="5MQ0"/>
<dbReference type="PDBsum" id="5WSG"/>
<dbReference type="PDBsum" id="5YLZ"/>
<dbReference type="PDBsum" id="6BK8"/>
<dbReference type="PDBsum" id="6EXN"/>
<dbReference type="PDBsum" id="6J6G"/>
<dbReference type="PDBsum" id="6J6H"/>
<dbReference type="PDBsum" id="6J6N"/>
<dbReference type="PDBsum" id="6J6Q"/>
<dbReference type="PDBsum" id="9DTR"/>
<dbReference type="EMDB" id="EMD-0686"/>
<dbReference type="EMDB" id="EMD-0687"/>
<dbReference type="EMDB" id="EMD-0691"/>
<dbReference type="EMDB" id="EMD-0692"/>
<dbReference type="EMDB" id="EMD-3539"/>
<dbReference type="EMDB" id="EMD-3541"/>
<dbReference type="EMDB" id="EMD-3979"/>
<dbReference type="EMDB" id="EMD-4055"/>
<dbReference type="EMDB" id="EMD-4057"/>
<dbReference type="EMDB" id="EMD-47157"/>
<dbReference type="EMDB" id="EMD-6839"/>
<dbReference type="EMDB" id="EMD-7109"/>
<dbReference type="EMDB" id="EMD-9524"/>
<dbReference type="EMDB" id="EMD-9525"/>
<dbReference type="SMR" id="Q03375"/>
<dbReference type="BioGRID" id="32534">
    <property type="interactions" value="171"/>
</dbReference>
<dbReference type="ComplexPortal" id="CPX-1651">
    <property type="entry name" value="PRP19-associated complex"/>
</dbReference>
<dbReference type="DIP" id="DIP-1847N"/>
<dbReference type="FunCoup" id="Q03375">
    <property type="interactions" value="87"/>
</dbReference>
<dbReference type="IntAct" id="Q03375">
    <property type="interactions" value="42"/>
</dbReference>
<dbReference type="MINT" id="Q03375"/>
<dbReference type="STRING" id="4932.YDR482C"/>
<dbReference type="iPTMnet" id="Q03375"/>
<dbReference type="PaxDb" id="4932-YDR482C"/>
<dbReference type="PeptideAtlas" id="Q03375"/>
<dbReference type="TopDownProteomics" id="Q03375"/>
<dbReference type="EnsemblFungi" id="YDR482C_mRNA">
    <property type="protein sequence ID" value="YDR482C"/>
    <property type="gene ID" value="YDR482C"/>
</dbReference>
<dbReference type="GeneID" id="852093"/>
<dbReference type="KEGG" id="sce:YDR482C"/>
<dbReference type="AGR" id="SGD:S000002890"/>
<dbReference type="SGD" id="S000002890">
    <property type="gene designation" value="CWC21"/>
</dbReference>
<dbReference type="VEuPathDB" id="FungiDB:YDR482C"/>
<dbReference type="eggNOG" id="KOG1869">
    <property type="taxonomic scope" value="Eukaryota"/>
</dbReference>
<dbReference type="HOGENOM" id="CLU_067891_3_1_1"/>
<dbReference type="InParanoid" id="Q03375"/>
<dbReference type="OMA" id="RIEVKCM"/>
<dbReference type="OrthoDB" id="10267305at2759"/>
<dbReference type="BioCyc" id="YEAST:G3O-30007-MONOMER"/>
<dbReference type="BioGRID-ORCS" id="852093">
    <property type="hits" value="6 hits in 10 CRISPR screens"/>
</dbReference>
<dbReference type="PRO" id="PR:Q03375"/>
<dbReference type="Proteomes" id="UP000002311">
    <property type="component" value="Chromosome IV"/>
</dbReference>
<dbReference type="RNAct" id="Q03375">
    <property type="molecule type" value="protein"/>
</dbReference>
<dbReference type="GO" id="GO:0005737">
    <property type="term" value="C:cytoplasm"/>
    <property type="evidence" value="ECO:0007669"/>
    <property type="project" value="UniProtKB-SubCell"/>
</dbReference>
<dbReference type="GO" id="GO:0000974">
    <property type="term" value="C:Prp19 complex"/>
    <property type="evidence" value="ECO:0000353"/>
    <property type="project" value="ComplexPortal"/>
</dbReference>
<dbReference type="GO" id="GO:0005684">
    <property type="term" value="C:U2-type spliceosomal complex"/>
    <property type="evidence" value="ECO:0000314"/>
    <property type="project" value="SGD"/>
</dbReference>
<dbReference type="GO" id="GO:0000398">
    <property type="term" value="P:mRNA splicing, via spliceosome"/>
    <property type="evidence" value="ECO:0000315"/>
    <property type="project" value="SGD"/>
</dbReference>
<dbReference type="Gene3D" id="6.10.140.420">
    <property type="match status" value="1"/>
</dbReference>
<dbReference type="InterPro" id="IPR051372">
    <property type="entry name" value="CWC21"/>
</dbReference>
<dbReference type="InterPro" id="IPR013170">
    <property type="entry name" value="mRNA_splic_Cwf21_dom"/>
</dbReference>
<dbReference type="PANTHER" id="PTHR36562">
    <property type="entry name" value="SERINE/ARGININE REPETITIVE MATRIX 2"/>
    <property type="match status" value="1"/>
</dbReference>
<dbReference type="PANTHER" id="PTHR36562:SF5">
    <property type="entry name" value="SERINE_ARGININE REPETITIVE MATRIX 2"/>
    <property type="match status" value="1"/>
</dbReference>
<dbReference type="Pfam" id="PF08312">
    <property type="entry name" value="cwf21"/>
    <property type="match status" value="1"/>
</dbReference>
<dbReference type="SMART" id="SM01115">
    <property type="entry name" value="cwf21"/>
    <property type="match status" value="1"/>
</dbReference>
<reference key="1">
    <citation type="journal article" date="1997" name="Nature">
        <title>The nucleotide sequence of Saccharomyces cerevisiae chromosome IV.</title>
        <authorList>
            <person name="Jacq C."/>
            <person name="Alt-Moerbe J."/>
            <person name="Andre B."/>
            <person name="Arnold W."/>
            <person name="Bahr A."/>
            <person name="Ballesta J.P.G."/>
            <person name="Bargues M."/>
            <person name="Baron L."/>
            <person name="Becker A."/>
            <person name="Biteau N."/>
            <person name="Bloecker H."/>
            <person name="Blugeon C."/>
            <person name="Boskovic J."/>
            <person name="Brandt P."/>
            <person name="Brueckner M."/>
            <person name="Buitrago M.J."/>
            <person name="Coster F."/>
            <person name="Delaveau T."/>
            <person name="del Rey F."/>
            <person name="Dujon B."/>
            <person name="Eide L.G."/>
            <person name="Garcia-Cantalejo J.M."/>
            <person name="Goffeau A."/>
            <person name="Gomez-Peris A."/>
            <person name="Granotier C."/>
            <person name="Hanemann V."/>
            <person name="Hankeln T."/>
            <person name="Hoheisel J.D."/>
            <person name="Jaeger W."/>
            <person name="Jimenez A."/>
            <person name="Jonniaux J.-L."/>
            <person name="Kraemer C."/>
            <person name="Kuester H."/>
            <person name="Laamanen P."/>
            <person name="Legros Y."/>
            <person name="Louis E.J."/>
            <person name="Moeller-Rieker S."/>
            <person name="Monnet A."/>
            <person name="Moro M."/>
            <person name="Mueller-Auer S."/>
            <person name="Nussbaumer B."/>
            <person name="Paricio N."/>
            <person name="Paulin L."/>
            <person name="Perea J."/>
            <person name="Perez-Alonso M."/>
            <person name="Perez-Ortin J.E."/>
            <person name="Pohl T.M."/>
            <person name="Prydz H."/>
            <person name="Purnelle B."/>
            <person name="Rasmussen S.W."/>
            <person name="Remacha M.A."/>
            <person name="Revuelta J.L."/>
            <person name="Rieger M."/>
            <person name="Salom D."/>
            <person name="Saluz H.P."/>
            <person name="Saiz J.E."/>
            <person name="Saren A.-M."/>
            <person name="Schaefer M."/>
            <person name="Scharfe M."/>
            <person name="Schmidt E.R."/>
            <person name="Schneider C."/>
            <person name="Scholler P."/>
            <person name="Schwarz S."/>
            <person name="Soler-Mira A."/>
            <person name="Urrestarazu L.A."/>
            <person name="Verhasselt P."/>
            <person name="Vissers S."/>
            <person name="Voet M."/>
            <person name="Volckaert G."/>
            <person name="Wagner G."/>
            <person name="Wambutt R."/>
            <person name="Wedler E."/>
            <person name="Wedler H."/>
            <person name="Woelfl S."/>
            <person name="Harris D.E."/>
            <person name="Bowman S."/>
            <person name="Brown D."/>
            <person name="Churcher C.M."/>
            <person name="Connor R."/>
            <person name="Dedman K."/>
            <person name="Gentles S."/>
            <person name="Hamlin N."/>
            <person name="Hunt S."/>
            <person name="Jones L."/>
            <person name="McDonald S."/>
            <person name="Murphy L.D."/>
            <person name="Niblett D."/>
            <person name="Odell C."/>
            <person name="Oliver K."/>
            <person name="Rajandream M.A."/>
            <person name="Richards C."/>
            <person name="Shore L."/>
            <person name="Walsh S.V."/>
            <person name="Barrell B.G."/>
            <person name="Dietrich F.S."/>
            <person name="Mulligan J.T."/>
            <person name="Allen E."/>
            <person name="Araujo R."/>
            <person name="Aviles E."/>
            <person name="Berno A."/>
            <person name="Carpenter J."/>
            <person name="Chen E."/>
            <person name="Cherry J.M."/>
            <person name="Chung E."/>
            <person name="Duncan M."/>
            <person name="Hunicke-Smith S."/>
            <person name="Hyman R.W."/>
            <person name="Komp C."/>
            <person name="Lashkari D."/>
            <person name="Lew H."/>
            <person name="Lin D."/>
            <person name="Mosedale D."/>
            <person name="Nakahara K."/>
            <person name="Namath A."/>
            <person name="Oefner P."/>
            <person name="Oh C."/>
            <person name="Petel F.X."/>
            <person name="Roberts D."/>
            <person name="Schramm S."/>
            <person name="Schroeder M."/>
            <person name="Shogren T."/>
            <person name="Shroff N."/>
            <person name="Winant A."/>
            <person name="Yelton M.A."/>
            <person name="Botstein D."/>
            <person name="Davis R.W."/>
            <person name="Johnston M."/>
            <person name="Andrews S."/>
            <person name="Brinkman R."/>
            <person name="Cooper J."/>
            <person name="Ding H."/>
            <person name="Du Z."/>
            <person name="Favello A."/>
            <person name="Fulton L."/>
            <person name="Gattung S."/>
            <person name="Greco T."/>
            <person name="Hallsworth K."/>
            <person name="Hawkins J."/>
            <person name="Hillier L.W."/>
            <person name="Jier M."/>
            <person name="Johnson D."/>
            <person name="Johnston L."/>
            <person name="Kirsten J."/>
            <person name="Kucaba T."/>
            <person name="Langston Y."/>
            <person name="Latreille P."/>
            <person name="Le T."/>
            <person name="Mardis E."/>
            <person name="Menezes S."/>
            <person name="Miller N."/>
            <person name="Nhan M."/>
            <person name="Pauley A."/>
            <person name="Peluso D."/>
            <person name="Rifkin L."/>
            <person name="Riles L."/>
            <person name="Taich A."/>
            <person name="Trevaskis E."/>
            <person name="Vignati D."/>
            <person name="Wilcox L."/>
            <person name="Wohldman P."/>
            <person name="Vaudin M."/>
            <person name="Wilson R."/>
            <person name="Waterston R."/>
            <person name="Albermann K."/>
            <person name="Hani J."/>
            <person name="Heumann K."/>
            <person name="Kleine K."/>
            <person name="Mewes H.-W."/>
            <person name="Zollner A."/>
            <person name="Zaccaria P."/>
        </authorList>
    </citation>
    <scope>NUCLEOTIDE SEQUENCE [LARGE SCALE GENOMIC DNA]</scope>
    <source>
        <strain>ATCC 204508 / S288c</strain>
    </source>
</reference>
<reference key="2">
    <citation type="journal article" date="2014" name="G3 (Bethesda)">
        <title>The reference genome sequence of Saccharomyces cerevisiae: Then and now.</title>
        <authorList>
            <person name="Engel S.R."/>
            <person name="Dietrich F.S."/>
            <person name="Fisk D.G."/>
            <person name="Binkley G."/>
            <person name="Balakrishnan R."/>
            <person name="Costanzo M.C."/>
            <person name="Dwight S.S."/>
            <person name="Hitz B.C."/>
            <person name="Karra K."/>
            <person name="Nash R.S."/>
            <person name="Weng S."/>
            <person name="Wong E.D."/>
            <person name="Lloyd P."/>
            <person name="Skrzypek M.S."/>
            <person name="Miyasato S.R."/>
            <person name="Simison M."/>
            <person name="Cherry J.M."/>
        </authorList>
    </citation>
    <scope>GENOME REANNOTATION</scope>
    <source>
        <strain>ATCC 204508 / S288c</strain>
    </source>
</reference>
<reference key="3">
    <citation type="journal article" date="2007" name="Genome Res.">
        <title>Approaching a complete repository of sequence-verified protein-encoding clones for Saccharomyces cerevisiae.</title>
        <authorList>
            <person name="Hu Y."/>
            <person name="Rolfs A."/>
            <person name="Bhullar B."/>
            <person name="Murthy T.V.S."/>
            <person name="Zhu C."/>
            <person name="Berger M.F."/>
            <person name="Camargo A.A."/>
            <person name="Kelley F."/>
            <person name="McCarron S."/>
            <person name="Jepson D."/>
            <person name="Richardson A."/>
            <person name="Raphael J."/>
            <person name="Moreira D."/>
            <person name="Taycher E."/>
            <person name="Zuo D."/>
            <person name="Mohr S."/>
            <person name="Kane M.F."/>
            <person name="Williamson J."/>
            <person name="Simpson A.J.G."/>
            <person name="Bulyk M.L."/>
            <person name="Harlow E."/>
            <person name="Marsischky G."/>
            <person name="Kolodner R.D."/>
            <person name="LaBaer J."/>
        </authorList>
    </citation>
    <scope>NUCLEOTIDE SEQUENCE [GENOMIC DNA]</scope>
    <source>
        <strain>ATCC 204508 / S288c</strain>
    </source>
</reference>
<reference key="4">
    <citation type="journal article" date="2002" name="Mol. Cell. Biol.">
        <title>Proteomics analysis reveals stable multiprotein complexes in both fission and budding yeasts containing Myb-related Cdc5p/Cef1p, novel pre-mRNA splicing factors, and snRNAs.</title>
        <authorList>
            <person name="Ohi M.D."/>
            <person name="Link A.J."/>
            <person name="Ren L."/>
            <person name="Jennings J.L."/>
            <person name="McDonald W.H."/>
            <person name="Gould K.L."/>
        </authorList>
    </citation>
    <scope>IDENTIFICATION IN THE CWC COMPLEX</scope>
    <scope>IDENTIFICATION BY MASS SPECTROMETRY</scope>
</reference>
<reference key="5">
    <citation type="journal article" date="2003" name="Nature">
        <title>Global analysis of protein localization in budding yeast.</title>
        <authorList>
            <person name="Huh W.-K."/>
            <person name="Falvo J.V."/>
            <person name="Gerke L.C."/>
            <person name="Carroll A.S."/>
            <person name="Howson R.W."/>
            <person name="Weissman J.S."/>
            <person name="O'Shea E.K."/>
        </authorList>
    </citation>
    <scope>SUBCELLULAR LOCATION [LARGE SCALE ANALYSIS]</scope>
</reference>
<reference key="6">
    <citation type="journal article" date="2003" name="Nature">
        <title>Global analysis of protein expression in yeast.</title>
        <authorList>
            <person name="Ghaemmaghami S."/>
            <person name="Huh W.-K."/>
            <person name="Bower K."/>
            <person name="Howson R.W."/>
            <person name="Belle A."/>
            <person name="Dephoure N."/>
            <person name="O'Shea E.K."/>
            <person name="Weissman J.S."/>
        </authorList>
    </citation>
    <scope>LEVEL OF PROTEIN EXPRESSION [LARGE SCALE ANALYSIS]</scope>
</reference>
<reference key="7">
    <citation type="journal article" date="2009" name="RNA">
        <title>Physical and genetic interactions of yeast Cwc21p, an ortholog of human SRm300/SRRM2, suggest a role at the catalytic center of the spliceosome.</title>
        <authorList>
            <person name="Grainger R.J."/>
            <person name="Barrass J.D."/>
            <person name="Jacquier A."/>
            <person name="Rain J.-C."/>
            <person name="Beggs J.D."/>
        </authorList>
    </citation>
    <scope>FUNCTION</scope>
    <scope>INTERACTION WITH PRP8 AND SNU114</scope>
</reference>
<reference key="8">
    <citation type="journal article" date="2009" name="RNA">
        <title>A systematic characterization of Cwc21, the yeast ortholog of the human spliceosomal protein SRm300.</title>
        <authorList>
            <person name="Khanna M."/>
            <person name="Van Bakel H."/>
            <person name="Tang X."/>
            <person name="Calarco J.A."/>
            <person name="Babak T."/>
            <person name="Guo G."/>
            <person name="Emili A."/>
            <person name="Greenblatt J.F."/>
            <person name="Hughes T.R."/>
            <person name="Krogan N.J."/>
            <person name="Blencowe B.J."/>
        </authorList>
    </citation>
    <scope>FUNCTION</scope>
    <scope>IDENTIFICATION IN SPLICEOSOME</scope>
</reference>
<organism>
    <name type="scientific">Saccharomyces cerevisiae (strain ATCC 204508 / S288c)</name>
    <name type="common">Baker's yeast</name>
    <dbReference type="NCBI Taxonomy" id="559292"/>
    <lineage>
        <taxon>Eukaryota</taxon>
        <taxon>Fungi</taxon>
        <taxon>Dikarya</taxon>
        <taxon>Ascomycota</taxon>
        <taxon>Saccharomycotina</taxon>
        <taxon>Saccharomycetes</taxon>
        <taxon>Saccharomycetales</taxon>
        <taxon>Saccharomycetaceae</taxon>
        <taxon>Saccharomyces</taxon>
    </lineage>
</organism>
<keyword id="KW-0002">3D-structure</keyword>
<keyword id="KW-0175">Coiled coil</keyword>
<keyword id="KW-0963">Cytoplasm</keyword>
<keyword id="KW-0507">mRNA processing</keyword>
<keyword id="KW-0508">mRNA splicing</keyword>
<keyword id="KW-0539">Nucleus</keyword>
<keyword id="KW-1185">Reference proteome</keyword>
<keyword id="KW-0747">Spliceosome</keyword>
<name>CWC21_YEAST</name>
<proteinExistence type="evidence at protein level"/>
<accession>Q03375</accession>
<accession>D6VTA5</accession>